<dbReference type="EMBL" id="CP000034">
    <property type="protein sequence ID" value="ABB63273.1"/>
    <property type="molecule type" value="Genomic_DNA"/>
</dbReference>
<dbReference type="RefSeq" id="WP_000211639.1">
    <property type="nucleotide sequence ID" value="NC_007606.1"/>
</dbReference>
<dbReference type="RefSeq" id="YP_404764.1">
    <property type="nucleotide sequence ID" value="NC_007606.1"/>
</dbReference>
<dbReference type="SMR" id="Q32BN2"/>
<dbReference type="STRING" id="300267.SDY_3274"/>
<dbReference type="EnsemblBacteria" id="ABB63273">
    <property type="protein sequence ID" value="ABB63273"/>
    <property type="gene ID" value="SDY_3274"/>
</dbReference>
<dbReference type="KEGG" id="sdy:SDY_3274"/>
<dbReference type="PATRIC" id="fig|300267.13.peg.3915"/>
<dbReference type="HOGENOM" id="CLU_044581_0_0_6"/>
<dbReference type="Proteomes" id="UP000002716">
    <property type="component" value="Chromosome"/>
</dbReference>
<dbReference type="GO" id="GO:0005886">
    <property type="term" value="C:plasma membrane"/>
    <property type="evidence" value="ECO:0007669"/>
    <property type="project" value="UniProtKB-SubCell"/>
</dbReference>
<dbReference type="GO" id="GO:0005295">
    <property type="term" value="F:neutral L-amino acid:sodium symporter activity"/>
    <property type="evidence" value="ECO:0007669"/>
    <property type="project" value="TreeGrafter"/>
</dbReference>
<dbReference type="GO" id="GO:0032329">
    <property type="term" value="P:serine transport"/>
    <property type="evidence" value="ECO:0007669"/>
    <property type="project" value="InterPro"/>
</dbReference>
<dbReference type="GO" id="GO:0015826">
    <property type="term" value="P:threonine transport"/>
    <property type="evidence" value="ECO:0007669"/>
    <property type="project" value="InterPro"/>
</dbReference>
<dbReference type="FunFam" id="1.10.3860.10:FF:000003">
    <property type="entry name" value="Serine/threonine transporter sstT"/>
    <property type="match status" value="1"/>
</dbReference>
<dbReference type="Gene3D" id="1.10.3860.10">
    <property type="entry name" value="Sodium:dicarboxylate symporter"/>
    <property type="match status" value="1"/>
</dbReference>
<dbReference type="HAMAP" id="MF_01582">
    <property type="entry name" value="Ser_Thr_transp_SstT"/>
    <property type="match status" value="1"/>
</dbReference>
<dbReference type="InterPro" id="IPR001991">
    <property type="entry name" value="Na-dicarboxylate_symporter"/>
</dbReference>
<dbReference type="InterPro" id="IPR036458">
    <property type="entry name" value="Na:dicarbo_symporter_sf"/>
</dbReference>
<dbReference type="InterPro" id="IPR023025">
    <property type="entry name" value="Ser_Thr_transp_SstT"/>
</dbReference>
<dbReference type="NCBIfam" id="NF010151">
    <property type="entry name" value="PRK13628.1"/>
    <property type="match status" value="1"/>
</dbReference>
<dbReference type="PANTHER" id="PTHR42865">
    <property type="entry name" value="PROTON/GLUTAMATE-ASPARTATE SYMPORTER"/>
    <property type="match status" value="1"/>
</dbReference>
<dbReference type="PANTHER" id="PTHR42865:SF8">
    <property type="entry name" value="SERINE_THREONINE TRANSPORTER SSTT"/>
    <property type="match status" value="1"/>
</dbReference>
<dbReference type="Pfam" id="PF00375">
    <property type="entry name" value="SDF"/>
    <property type="match status" value="1"/>
</dbReference>
<dbReference type="PRINTS" id="PR00173">
    <property type="entry name" value="EDTRNSPORT"/>
</dbReference>
<dbReference type="SUPFAM" id="SSF118215">
    <property type="entry name" value="Proton glutamate symport protein"/>
    <property type="match status" value="1"/>
</dbReference>
<dbReference type="PROSITE" id="PS00713">
    <property type="entry name" value="NA_DICARBOXYL_SYMP_1"/>
    <property type="match status" value="1"/>
</dbReference>
<accession>Q32BN2</accession>
<protein>
    <recommendedName>
        <fullName evidence="1">Serine/threonine transporter SstT</fullName>
    </recommendedName>
    <alternativeName>
        <fullName evidence="1">Na(+)/serine-threonine symporter</fullName>
    </alternativeName>
</protein>
<comment type="function">
    <text evidence="1">Involved in the import of serine and threonine into the cell, with the concomitant import of sodium (symport system).</text>
</comment>
<comment type="catalytic activity">
    <reaction evidence="1">
        <text>L-serine(in) + Na(+)(in) = L-serine(out) + Na(+)(out)</text>
        <dbReference type="Rhea" id="RHEA:29575"/>
        <dbReference type="ChEBI" id="CHEBI:29101"/>
        <dbReference type="ChEBI" id="CHEBI:33384"/>
    </reaction>
    <physiologicalReaction direction="right-to-left" evidence="1">
        <dbReference type="Rhea" id="RHEA:29577"/>
    </physiologicalReaction>
</comment>
<comment type="catalytic activity">
    <reaction evidence="1">
        <text>L-threonine(in) + Na(+)(in) = L-threonine(out) + Na(+)(out)</text>
        <dbReference type="Rhea" id="RHEA:69999"/>
        <dbReference type="ChEBI" id="CHEBI:29101"/>
        <dbReference type="ChEBI" id="CHEBI:57926"/>
    </reaction>
    <physiologicalReaction direction="right-to-left" evidence="1">
        <dbReference type="Rhea" id="RHEA:70001"/>
    </physiologicalReaction>
</comment>
<comment type="subcellular location">
    <subcellularLocation>
        <location evidence="1">Cell inner membrane</location>
        <topology evidence="1">Multi-pass membrane protein</topology>
    </subcellularLocation>
</comment>
<comment type="similarity">
    <text evidence="1">Belongs to the dicarboxylate/amino acid:cation symporter (DAACS) (TC 2.A.23) family.</text>
</comment>
<name>SSTT_SHIDS</name>
<evidence type="ECO:0000255" key="1">
    <source>
        <dbReference type="HAMAP-Rule" id="MF_01582"/>
    </source>
</evidence>
<proteinExistence type="inferred from homology"/>
<gene>
    <name evidence="1" type="primary">sstT</name>
    <name type="ordered locus">SDY_3274</name>
</gene>
<feature type="initiator methionine" description="Removed" evidence="1">
    <location>
        <position position="1"/>
    </location>
</feature>
<feature type="chain" id="PRO_0000309130" description="Serine/threonine transporter SstT">
    <location>
        <begin position="2"/>
        <end position="414"/>
    </location>
</feature>
<feature type="topological domain" description="Cytoplasmic" evidence="1">
    <location>
        <begin position="2"/>
        <end position="15"/>
    </location>
</feature>
<feature type="transmembrane region" description="Helical" evidence="1">
    <location>
        <begin position="16"/>
        <end position="36"/>
    </location>
</feature>
<feature type="topological domain" description="Periplasmic" evidence="1">
    <location>
        <begin position="37"/>
        <end position="45"/>
    </location>
</feature>
<feature type="transmembrane region" description="Helical" evidence="1">
    <location>
        <begin position="46"/>
        <end position="66"/>
    </location>
</feature>
<feature type="topological domain" description="Cytoplasmic" evidence="1">
    <location>
        <begin position="67"/>
        <end position="83"/>
    </location>
</feature>
<feature type="transmembrane region" description="Helical" evidence="1">
    <location>
        <begin position="84"/>
        <end position="104"/>
    </location>
</feature>
<feature type="topological domain" description="Periplasmic" evidence="1">
    <location>
        <begin position="105"/>
        <end position="142"/>
    </location>
</feature>
<feature type="transmembrane region" description="Helical" evidence="1">
    <location>
        <begin position="143"/>
        <end position="163"/>
    </location>
</feature>
<feature type="topological domain" description="Cytoplasmic" evidence="1">
    <location>
        <begin position="164"/>
        <end position="179"/>
    </location>
</feature>
<feature type="transmembrane region" description="Helical" evidence="1">
    <location>
        <begin position="180"/>
        <end position="200"/>
    </location>
</feature>
<feature type="topological domain" description="Periplasmic" evidence="1">
    <location>
        <begin position="201"/>
        <end position="217"/>
    </location>
</feature>
<feature type="transmembrane region" description="Helical" evidence="1">
    <location>
        <begin position="218"/>
        <end position="238"/>
    </location>
</feature>
<feature type="topological domain" description="Cytoplasmic" evidence="1">
    <location>
        <begin position="239"/>
        <end position="299"/>
    </location>
</feature>
<feature type="transmembrane region" description="Helical" evidence="1">
    <location>
        <begin position="300"/>
        <end position="320"/>
    </location>
</feature>
<feature type="topological domain" description="Periplasmic" evidence="1">
    <location>
        <begin position="321"/>
        <end position="331"/>
    </location>
</feature>
<feature type="transmembrane region" description="Helical" evidence="1">
    <location>
        <begin position="332"/>
        <end position="352"/>
    </location>
</feature>
<feature type="topological domain" description="Cytoplasmic" evidence="1">
    <location>
        <begin position="353"/>
        <end position="414"/>
    </location>
</feature>
<keyword id="KW-0029">Amino-acid transport</keyword>
<keyword id="KW-0997">Cell inner membrane</keyword>
<keyword id="KW-1003">Cell membrane</keyword>
<keyword id="KW-0472">Membrane</keyword>
<keyword id="KW-1185">Reference proteome</keyword>
<keyword id="KW-0769">Symport</keyword>
<keyword id="KW-0812">Transmembrane</keyword>
<keyword id="KW-1133">Transmembrane helix</keyword>
<keyword id="KW-0813">Transport</keyword>
<organism>
    <name type="scientific">Shigella dysenteriae serotype 1 (strain Sd197)</name>
    <dbReference type="NCBI Taxonomy" id="300267"/>
    <lineage>
        <taxon>Bacteria</taxon>
        <taxon>Pseudomonadati</taxon>
        <taxon>Pseudomonadota</taxon>
        <taxon>Gammaproteobacteria</taxon>
        <taxon>Enterobacterales</taxon>
        <taxon>Enterobacteriaceae</taxon>
        <taxon>Shigella</taxon>
    </lineage>
</organism>
<reference key="1">
    <citation type="journal article" date="2005" name="Nucleic Acids Res.">
        <title>Genome dynamics and diversity of Shigella species, the etiologic agents of bacillary dysentery.</title>
        <authorList>
            <person name="Yang F."/>
            <person name="Yang J."/>
            <person name="Zhang X."/>
            <person name="Chen L."/>
            <person name="Jiang Y."/>
            <person name="Yan Y."/>
            <person name="Tang X."/>
            <person name="Wang J."/>
            <person name="Xiong Z."/>
            <person name="Dong J."/>
            <person name="Xue Y."/>
            <person name="Zhu Y."/>
            <person name="Xu X."/>
            <person name="Sun L."/>
            <person name="Chen S."/>
            <person name="Nie H."/>
            <person name="Peng J."/>
            <person name="Xu J."/>
            <person name="Wang Y."/>
            <person name="Yuan Z."/>
            <person name="Wen Y."/>
            <person name="Yao Z."/>
            <person name="Shen Y."/>
            <person name="Qiang B."/>
            <person name="Hou Y."/>
            <person name="Yu J."/>
            <person name="Jin Q."/>
        </authorList>
    </citation>
    <scope>NUCLEOTIDE SEQUENCE [LARGE SCALE GENOMIC DNA]</scope>
    <source>
        <strain>Sd197</strain>
    </source>
</reference>
<sequence>MTTQRSPGLFRRLAHGSLVKQILVGLVLGILLAWISKPAAEAVGLLGTLFVGALKAVAPILVLMLVMASIANHQHGQKTNILPILFLYLLGTFSAALAAVVFSFAFPSTLHLSSSAGDISPPSGIVEVMRGLVMSMVSNPIDALLKGNYIGILVWAIGLGFALRHGNETTKNLVNDMSNAVTFMVKLVIRFAPIGIFGLVSSTLATTGFSTLWGYAQLLVVLVGCMLLVALVVNPLLVWWKIRRNPFPLVLLCLRESGVYAFFTRSSAANIPVNMALCEKLNLDRDTYSVSIPLGATINMAGAAITITVLTLAAVNTLGIPVDLPTALLLSVVASLCACGASGVAGGSLLLIPLACNMFGISNDIAMQVVAVGFIIGVLQDSCETALNSSTDVLFTAAACQAEDDRLANSALRN</sequence>